<evidence type="ECO:0000250" key="1">
    <source>
        <dbReference type="UniProtKB" id="P42292"/>
    </source>
</evidence>
<evidence type="ECO:0000250" key="2">
    <source>
        <dbReference type="UniProtKB" id="Q13740"/>
    </source>
</evidence>
<evidence type="ECO:0000250" key="3">
    <source>
        <dbReference type="UniProtKB" id="Q61490"/>
    </source>
</evidence>
<evidence type="ECO:0000255" key="4"/>
<evidence type="ECO:0000255" key="5">
    <source>
        <dbReference type="PROSITE-ProRule" id="PRU00114"/>
    </source>
</evidence>
<evidence type="ECO:0000256" key="6">
    <source>
        <dbReference type="SAM" id="MobiDB-lite"/>
    </source>
</evidence>
<evidence type="ECO:0000303" key="7">
    <source>
    </source>
</evidence>
<sequence length="521" mass="58113">GSPVFIAFRSSTKKSVQYDDVPEYKDRLNLSENYTLSISNARISDEKRFVCMLVTEDDVFEAPTVVKVFKQPSKPEIVSKAPFLETEQLQKLGDCISRDSYPEGNITWYRNGKVLQPLEGAVVIIFKKQMDPVTQLYTMTSSLEYKTTKADIQTPFTCSITYYGPSGQKTVHSEQAVFDIYYPTEQVTIQVLPPKNAIKEGDNITLKCLGNGNPPPEEFFFYLPGQPEGIRSSNTYTLPNVRRNATGNYKCSLIDKKSLIASTAITVHYLDLSLNPXGELTKQIGDSLPVSCTISAIRNATVVWMKDNIKLRSSPSFSSLQYQDAGNYVCETALQEVEGLKKRESLTLIVEVKPQIKMTKKTDPSGLSKTIICHVEGFPKPAIQWTITGSGSVINQTEESPYINGRYYSKIIISPEENVTLTCAAENQLERTVNSLNVSAISIPEHDEADEISDENREKVNDQAKLIVGIVVGLLLAALVAGVVYWLYMKKSKTASKHVNKDLGNMEENKKLEENNHKTEA</sequence>
<organism>
    <name type="scientific">Oryctolagus cuniculus</name>
    <name type="common">Rabbit</name>
    <dbReference type="NCBI Taxonomy" id="9986"/>
    <lineage>
        <taxon>Eukaryota</taxon>
        <taxon>Metazoa</taxon>
        <taxon>Chordata</taxon>
        <taxon>Craniata</taxon>
        <taxon>Vertebrata</taxon>
        <taxon>Euteleostomi</taxon>
        <taxon>Mammalia</taxon>
        <taxon>Eutheria</taxon>
        <taxon>Euarchontoglires</taxon>
        <taxon>Glires</taxon>
        <taxon>Lagomorpha</taxon>
        <taxon>Leporidae</taxon>
        <taxon>Oryctolagus</taxon>
    </lineage>
</organism>
<gene>
    <name type="primary">ALCAM</name>
</gene>
<keyword id="KW-1064">Adaptive immunity</keyword>
<keyword id="KW-0130">Cell adhesion</keyword>
<keyword id="KW-1003">Cell membrane</keyword>
<keyword id="KW-0966">Cell projection</keyword>
<keyword id="KW-1015">Disulfide bond</keyword>
<keyword id="KW-0325">Glycoprotein</keyword>
<keyword id="KW-0391">Immunity</keyword>
<keyword id="KW-0393">Immunoglobulin domain</keyword>
<keyword id="KW-0472">Membrane</keyword>
<keyword id="KW-1185">Reference proteome</keyword>
<keyword id="KW-0677">Repeat</keyword>
<keyword id="KW-0812">Transmembrane</keyword>
<keyword id="KW-1133">Transmembrane helix</keyword>
<proteinExistence type="evidence at transcript level"/>
<feature type="chain" id="PRO_0000072678" description="CD166 antigen">
    <location>
        <begin position="1" status="less than"/>
        <end position="521"/>
    </location>
</feature>
<feature type="topological domain" description="Extracellular" evidence="4">
    <location>
        <begin position="1" status="less than"/>
        <end position="465"/>
    </location>
</feature>
<feature type="transmembrane region" description="Helical" evidence="4">
    <location>
        <begin position="466"/>
        <end position="487"/>
    </location>
</feature>
<feature type="topological domain" description="Cytoplasmic" evidence="4">
    <location>
        <begin position="488"/>
        <end position="521"/>
    </location>
</feature>
<feature type="domain" description="Ig-like V-type 2">
    <location>
        <begin position="63"/>
        <end position="172"/>
    </location>
</feature>
<feature type="domain" description="Ig-like C2-type 1">
    <location>
        <begin position="183"/>
        <end position="266"/>
    </location>
</feature>
<feature type="domain" description="Ig-like C2-type 2">
    <location>
        <begin position="271"/>
        <end position="347"/>
    </location>
</feature>
<feature type="domain" description="Ig-like C2-type 3">
    <location>
        <begin position="354"/>
        <end position="439"/>
    </location>
</feature>
<feature type="region of interest" description="Disordered" evidence="6">
    <location>
        <begin position="500"/>
        <end position="521"/>
    </location>
</feature>
<feature type="compositionally biased region" description="Basic and acidic residues" evidence="6">
    <location>
        <begin position="507"/>
        <end position="521"/>
    </location>
</feature>
<feature type="glycosylation site" description="N-linked (GlcNAc...) asparagine" evidence="4">
    <location>
        <position position="29"/>
    </location>
</feature>
<feature type="glycosylation site" description="N-linked (GlcNAc...) asparagine" evidence="4">
    <location>
        <position position="33"/>
    </location>
</feature>
<feature type="glycosylation site" description="N-linked (GlcNAc...) asparagine" evidence="4">
    <location>
        <position position="105"/>
    </location>
</feature>
<feature type="glycosylation site" description="N-linked (GlcNAc...) asparagine" evidence="4">
    <location>
        <position position="203"/>
    </location>
</feature>
<feature type="glycosylation site" description="N-linked (GlcNAc...) asparagine" evidence="4">
    <location>
        <position position="244"/>
    </location>
</feature>
<feature type="glycosylation site" description="N-linked (GlcNAc...) asparagine" evidence="4">
    <location>
        <position position="299"/>
    </location>
</feature>
<feature type="glycosylation site" description="N-linked (GlcNAc...) asparagine" evidence="4">
    <location>
        <position position="395"/>
    </location>
</feature>
<feature type="glycosylation site" description="N-linked (GlcNAc...) asparagine" evidence="4">
    <location>
        <position position="418"/>
    </location>
</feature>
<feature type="glycosylation site" description="N-linked (GlcNAc...) asparagine" evidence="4">
    <location>
        <position position="437"/>
    </location>
</feature>
<feature type="disulfide bond" evidence="5">
    <location>
        <begin position="95"/>
        <end position="158"/>
    </location>
</feature>
<feature type="disulfide bond" evidence="5">
    <location>
        <begin position="208"/>
        <end position="251"/>
    </location>
</feature>
<feature type="disulfide bond" evidence="5">
    <location>
        <begin position="292"/>
        <end position="330"/>
    </location>
</feature>
<feature type="disulfide bond" evidence="5">
    <location>
        <begin position="373"/>
        <end position="423"/>
    </location>
</feature>
<feature type="non-terminal residue">
    <location>
        <position position="1"/>
    </location>
</feature>
<protein>
    <recommendedName>
        <fullName>CD166 antigen</fullName>
    </recommendedName>
    <alternativeName>
        <fullName>Activated leukocyte cell adhesion molecule</fullName>
    </alternativeName>
    <alternativeName>
        <fullName evidence="7">SB-10 antigen</fullName>
    </alternativeName>
    <cdAntigenName>CD166</cdAntigenName>
</protein>
<reference key="1">
    <citation type="journal article" date="1998" name="J. Bone Miner. Res.">
        <title>Mesenchymal stem cell surface antigen SB-10 corresponds to activated leukocyte cell adhesion molecule and is involved in osteogenic differentiation.</title>
        <authorList>
            <person name="Bruder S.P."/>
            <person name="Ricalton N.S."/>
            <person name="Boynton R.E."/>
            <person name="Connolly T.J."/>
            <person name="Jaiswal N."/>
            <person name="Zaia J."/>
            <person name="Barry F.P."/>
        </authorList>
    </citation>
    <scope>NUCLEOTIDE SEQUENCE [MRNA]</scope>
    <source>
        <tissue>Mesenchymal cell</tissue>
    </source>
</reference>
<dbReference type="EMBL" id="Y13243">
    <property type="protein sequence ID" value="CAA73695.1"/>
    <property type="molecule type" value="mRNA"/>
</dbReference>
<dbReference type="STRING" id="9986.ENSOCUP00000009720"/>
<dbReference type="GlyCosmos" id="O46651">
    <property type="glycosylation" value="9 sites, No reported glycans"/>
</dbReference>
<dbReference type="PaxDb" id="9986-ENSOCUP00000009720"/>
<dbReference type="eggNOG" id="ENOG502RMQM">
    <property type="taxonomic scope" value="Eukaryota"/>
</dbReference>
<dbReference type="InParanoid" id="O46651"/>
<dbReference type="Proteomes" id="UP000001811">
    <property type="component" value="Unplaced"/>
</dbReference>
<dbReference type="GO" id="GO:0030424">
    <property type="term" value="C:axon"/>
    <property type="evidence" value="ECO:0000250"/>
    <property type="project" value="UniProtKB"/>
</dbReference>
<dbReference type="GO" id="GO:0030425">
    <property type="term" value="C:dendrite"/>
    <property type="evidence" value="ECO:0007669"/>
    <property type="project" value="UniProtKB-SubCell"/>
</dbReference>
<dbReference type="GO" id="GO:0001772">
    <property type="term" value="C:immunological synapse"/>
    <property type="evidence" value="ECO:0000250"/>
    <property type="project" value="UniProtKB"/>
</dbReference>
<dbReference type="GO" id="GO:0005886">
    <property type="term" value="C:plasma membrane"/>
    <property type="evidence" value="ECO:0000250"/>
    <property type="project" value="UniProtKB"/>
</dbReference>
<dbReference type="GO" id="GO:0002250">
    <property type="term" value="P:adaptive immune response"/>
    <property type="evidence" value="ECO:0007669"/>
    <property type="project" value="UniProtKB-KW"/>
</dbReference>
<dbReference type="GO" id="GO:0048846">
    <property type="term" value="P:axon extension involved in axon guidance"/>
    <property type="evidence" value="ECO:0000250"/>
    <property type="project" value="UniProtKB"/>
</dbReference>
<dbReference type="GO" id="GO:0007155">
    <property type="term" value="P:cell adhesion"/>
    <property type="evidence" value="ECO:0000250"/>
    <property type="project" value="UniProtKB"/>
</dbReference>
<dbReference type="GO" id="GO:0007157">
    <property type="term" value="P:heterophilic cell-cell adhesion via plasma membrane cell adhesion molecules"/>
    <property type="evidence" value="ECO:0000250"/>
    <property type="project" value="UniProtKB"/>
</dbReference>
<dbReference type="GO" id="GO:1990138">
    <property type="term" value="P:neuron projection extension"/>
    <property type="evidence" value="ECO:0000250"/>
    <property type="project" value="UniProtKB"/>
</dbReference>
<dbReference type="GO" id="GO:0031290">
    <property type="term" value="P:retinal ganglion cell axon guidance"/>
    <property type="evidence" value="ECO:0000250"/>
    <property type="project" value="UniProtKB"/>
</dbReference>
<dbReference type="CDD" id="cd00096">
    <property type="entry name" value="Ig"/>
    <property type="match status" value="2"/>
</dbReference>
<dbReference type="FunFam" id="2.60.40.10:FF:000351">
    <property type="entry name" value="CD166 antigen isoform X1"/>
    <property type="match status" value="1"/>
</dbReference>
<dbReference type="FunFam" id="2.60.40.10:FF:000384">
    <property type="entry name" value="CD166 antigen isoform X1"/>
    <property type="match status" value="1"/>
</dbReference>
<dbReference type="FunFam" id="2.60.40.10:FF:000472">
    <property type="entry name" value="CD166 antigen isoform X2"/>
    <property type="match status" value="1"/>
</dbReference>
<dbReference type="Gene3D" id="2.60.40.10">
    <property type="entry name" value="Immunoglobulins"/>
    <property type="match status" value="5"/>
</dbReference>
<dbReference type="InterPro" id="IPR013162">
    <property type="entry name" value="CD80_C2-set"/>
</dbReference>
<dbReference type="InterPro" id="IPR007110">
    <property type="entry name" value="Ig-like_dom"/>
</dbReference>
<dbReference type="InterPro" id="IPR036179">
    <property type="entry name" value="Ig-like_dom_sf"/>
</dbReference>
<dbReference type="InterPro" id="IPR013783">
    <property type="entry name" value="Ig-like_fold"/>
</dbReference>
<dbReference type="InterPro" id="IPR003599">
    <property type="entry name" value="Ig_sub"/>
</dbReference>
<dbReference type="InterPro" id="IPR003598">
    <property type="entry name" value="Ig_sub2"/>
</dbReference>
<dbReference type="InterPro" id="IPR051116">
    <property type="entry name" value="Surface_Rcpt/Adhesion_Mol"/>
</dbReference>
<dbReference type="PANTHER" id="PTHR11973:SF2">
    <property type="entry name" value="CD166 ANTIGEN"/>
    <property type="match status" value="1"/>
</dbReference>
<dbReference type="PANTHER" id="PTHR11973">
    <property type="entry name" value="CELL SURFACE GLYCOPROTEIN MUC18-RELATED"/>
    <property type="match status" value="1"/>
</dbReference>
<dbReference type="Pfam" id="PF08205">
    <property type="entry name" value="C2-set_2"/>
    <property type="match status" value="1"/>
</dbReference>
<dbReference type="Pfam" id="PF13927">
    <property type="entry name" value="Ig_3"/>
    <property type="match status" value="1"/>
</dbReference>
<dbReference type="SMART" id="SM00409">
    <property type="entry name" value="IG"/>
    <property type="match status" value="2"/>
</dbReference>
<dbReference type="SMART" id="SM00408">
    <property type="entry name" value="IGc2"/>
    <property type="match status" value="2"/>
</dbReference>
<dbReference type="SUPFAM" id="SSF48726">
    <property type="entry name" value="Immunoglobulin"/>
    <property type="match status" value="4"/>
</dbReference>
<dbReference type="PROSITE" id="PS50835">
    <property type="entry name" value="IG_LIKE"/>
    <property type="match status" value="4"/>
</dbReference>
<comment type="function">
    <text evidence="1 2 3">Cell adhesion molecule that mediates both heterotypic cell-cell contacts via its interaction with CD6, as well as homotypic cell-cell contacts. Promotes T-cell activation and proliferation via its interactions with CD6 (By similarity). Contributes to the formation and maturation of the immunological synapse via its interactions with CD6 (By similarity). Mediates homotypic interactions with cells that express ALCAM. Mediates attachment of dendritic cells onto endothelial cells via homotypic interaction. Inhibits endothelial cell migration and promotes endothelial tube formation via homotypic interactions. Required for normal organization of the lymph vessel network. Required for normal hematopoietic stem cell engraftment in the bone marrow. Plays a role in hematopoiesis; required for normal numbers of hematopoietic stem cells in bone marrow. Promotes in vitro osteoblast proliferation and differentiation (By similarity). Promotes neurite extension, axon growth and axon guidance; axons grow preferentially on surfaces that contain ALCAM (By similarity). Mediates outgrowth and pathfinding for retinal ganglion cell axons (By similarity).</text>
</comment>
<comment type="subunit">
    <text evidence="2">Homodimer. Interacts (via extracellular domain) with CD6 (via extracellular domain). Homodimerization and interaction with CD6 involve the same region and cannot occur simultaneously. The affinity for CD6 is much higher than the affinity for self-association. Interacts (via glycosylated extracellular domain) with LGALS1 and LGALS3. Interaction with LGALS1 or LGALS3 inhibits interaction with CD6.</text>
</comment>
<comment type="subcellular location">
    <subcellularLocation>
        <location evidence="3">Cell membrane</location>
        <topology evidence="3">Single-pass type I membrane protein</topology>
    </subcellularLocation>
    <subcellularLocation>
        <location evidence="3">Cell projection</location>
        <location evidence="3">Axon</location>
    </subcellularLocation>
    <subcellularLocation>
        <location evidence="3">Cell projection</location>
        <location evidence="3">Dendrite</location>
    </subcellularLocation>
    <text evidence="2">Detected at the immunological synapse, i.e, at the contact zone between antigen-presenting dendritic cells and T-cells. Colocalizes with CD6 and the TCR/CD3 complex at the immunological synapse.</text>
</comment>
<comment type="domain">
    <text evidence="2">The CD6 binding site is located in the N-terminal Ig-like domain.</text>
</comment>
<comment type="PTM">
    <text evidence="2">Glycosylated.</text>
</comment>
<accession>O46651</accession>
<name>CD166_RABIT</name>